<protein>
    <recommendedName>
        <fullName>Sucrose synthase 3</fullName>
        <shortName>AtSUS3</shortName>
        <ecNumber>2.4.1.13</ecNumber>
    </recommendedName>
    <alternativeName>
        <fullName>Sucrose-UDP glucosyltransferase 3</fullName>
    </alternativeName>
</protein>
<feature type="chain" id="PRO_0000418802" description="Sucrose synthase 3">
    <location>
        <begin position="1"/>
        <end position="809"/>
    </location>
</feature>
<feature type="region of interest" description="GT-B glycosyltransferase" evidence="1">
    <location>
        <begin position="277"/>
        <end position="755"/>
    </location>
</feature>
<accession>Q9M111</accession>
<accession>Q9SBD5</accession>
<gene>
    <name type="primary">SUS3</name>
    <name type="ordered locus">At4g02280</name>
    <name type="ORF">T2H3.8</name>
</gene>
<evidence type="ECO:0000250" key="1"/>
<evidence type="ECO:0000269" key="2">
    <source>
    </source>
</evidence>
<evidence type="ECO:0000269" key="3">
    <source>
    </source>
</evidence>
<evidence type="ECO:0000269" key="4">
    <source>
    </source>
</evidence>
<evidence type="ECO:0000269" key="5">
    <source>
    </source>
</evidence>
<evidence type="ECO:0000269" key="6">
    <source>
    </source>
</evidence>
<evidence type="ECO:0000269" key="7">
    <source>
    </source>
</evidence>
<evidence type="ECO:0000305" key="8"/>
<reference key="1">
    <citation type="journal article" date="1999" name="Nature">
        <title>Sequence and analysis of chromosome 4 of the plant Arabidopsis thaliana.</title>
        <authorList>
            <person name="Mayer K.F.X."/>
            <person name="Schueller C."/>
            <person name="Wambutt R."/>
            <person name="Murphy G."/>
            <person name="Volckaert G."/>
            <person name="Pohl T."/>
            <person name="Duesterhoeft A."/>
            <person name="Stiekema W."/>
            <person name="Entian K.-D."/>
            <person name="Terryn N."/>
            <person name="Harris B."/>
            <person name="Ansorge W."/>
            <person name="Brandt P."/>
            <person name="Grivell L.A."/>
            <person name="Rieger M."/>
            <person name="Weichselgartner M."/>
            <person name="de Simone V."/>
            <person name="Obermaier B."/>
            <person name="Mache R."/>
            <person name="Mueller M."/>
            <person name="Kreis M."/>
            <person name="Delseny M."/>
            <person name="Puigdomenech P."/>
            <person name="Watson M."/>
            <person name="Schmidtheini T."/>
            <person name="Reichert B."/>
            <person name="Portetelle D."/>
            <person name="Perez-Alonso M."/>
            <person name="Boutry M."/>
            <person name="Bancroft I."/>
            <person name="Vos P."/>
            <person name="Hoheisel J."/>
            <person name="Zimmermann W."/>
            <person name="Wedler H."/>
            <person name="Ridley P."/>
            <person name="Langham S.-A."/>
            <person name="McCullagh B."/>
            <person name="Bilham L."/>
            <person name="Robben J."/>
            <person name="van der Schueren J."/>
            <person name="Grymonprez B."/>
            <person name="Chuang Y.-J."/>
            <person name="Vandenbussche F."/>
            <person name="Braeken M."/>
            <person name="Weltjens I."/>
            <person name="Voet M."/>
            <person name="Bastiaens I."/>
            <person name="Aert R."/>
            <person name="Defoor E."/>
            <person name="Weitzenegger T."/>
            <person name="Bothe G."/>
            <person name="Ramsperger U."/>
            <person name="Hilbert H."/>
            <person name="Braun M."/>
            <person name="Holzer E."/>
            <person name="Brandt A."/>
            <person name="Peters S."/>
            <person name="van Staveren M."/>
            <person name="Dirkse W."/>
            <person name="Mooijman P."/>
            <person name="Klein Lankhorst R."/>
            <person name="Rose M."/>
            <person name="Hauf J."/>
            <person name="Koetter P."/>
            <person name="Berneiser S."/>
            <person name="Hempel S."/>
            <person name="Feldpausch M."/>
            <person name="Lamberth S."/>
            <person name="Van den Daele H."/>
            <person name="De Keyser A."/>
            <person name="Buysshaert C."/>
            <person name="Gielen J."/>
            <person name="Villarroel R."/>
            <person name="De Clercq R."/>
            <person name="van Montagu M."/>
            <person name="Rogers J."/>
            <person name="Cronin A."/>
            <person name="Quail M.A."/>
            <person name="Bray-Allen S."/>
            <person name="Clark L."/>
            <person name="Doggett J."/>
            <person name="Hall S."/>
            <person name="Kay M."/>
            <person name="Lennard N."/>
            <person name="McLay K."/>
            <person name="Mayes R."/>
            <person name="Pettett A."/>
            <person name="Rajandream M.A."/>
            <person name="Lyne M."/>
            <person name="Benes V."/>
            <person name="Rechmann S."/>
            <person name="Borkova D."/>
            <person name="Bloecker H."/>
            <person name="Scharfe M."/>
            <person name="Grimm M."/>
            <person name="Loehnert T.-H."/>
            <person name="Dose S."/>
            <person name="de Haan M."/>
            <person name="Maarse A.C."/>
            <person name="Schaefer M."/>
            <person name="Mueller-Auer S."/>
            <person name="Gabel C."/>
            <person name="Fuchs M."/>
            <person name="Fartmann B."/>
            <person name="Granderath K."/>
            <person name="Dauner D."/>
            <person name="Herzl A."/>
            <person name="Neumann S."/>
            <person name="Argiriou A."/>
            <person name="Vitale D."/>
            <person name="Liguori R."/>
            <person name="Piravandi E."/>
            <person name="Massenet O."/>
            <person name="Quigley F."/>
            <person name="Clabauld G."/>
            <person name="Muendlein A."/>
            <person name="Felber R."/>
            <person name="Schnabl S."/>
            <person name="Hiller R."/>
            <person name="Schmidt W."/>
            <person name="Lecharny A."/>
            <person name="Aubourg S."/>
            <person name="Chefdor F."/>
            <person name="Cooke R."/>
            <person name="Berger C."/>
            <person name="Monfort A."/>
            <person name="Casacuberta E."/>
            <person name="Gibbons T."/>
            <person name="Weber N."/>
            <person name="Vandenbol M."/>
            <person name="Bargues M."/>
            <person name="Terol J."/>
            <person name="Torres A."/>
            <person name="Perez-Perez A."/>
            <person name="Purnelle B."/>
            <person name="Bent E."/>
            <person name="Johnson S."/>
            <person name="Tacon D."/>
            <person name="Jesse T."/>
            <person name="Heijnen L."/>
            <person name="Schwarz S."/>
            <person name="Scholler P."/>
            <person name="Heber S."/>
            <person name="Francs P."/>
            <person name="Bielke C."/>
            <person name="Frishman D."/>
            <person name="Haase D."/>
            <person name="Lemcke K."/>
            <person name="Mewes H.-W."/>
            <person name="Stocker S."/>
            <person name="Zaccaria P."/>
            <person name="Bevan M."/>
            <person name="Wilson R.K."/>
            <person name="de la Bastide M."/>
            <person name="Habermann K."/>
            <person name="Parnell L."/>
            <person name="Dedhia N."/>
            <person name="Gnoj L."/>
            <person name="Schutz K."/>
            <person name="Huang E."/>
            <person name="Spiegel L."/>
            <person name="Sekhon M."/>
            <person name="Murray J."/>
            <person name="Sheet P."/>
            <person name="Cordes M."/>
            <person name="Abu-Threideh J."/>
            <person name="Stoneking T."/>
            <person name="Kalicki J."/>
            <person name="Graves T."/>
            <person name="Harmon G."/>
            <person name="Edwards J."/>
            <person name="Latreille P."/>
            <person name="Courtney L."/>
            <person name="Cloud J."/>
            <person name="Abbott A."/>
            <person name="Scott K."/>
            <person name="Johnson D."/>
            <person name="Minx P."/>
            <person name="Bentley D."/>
            <person name="Fulton B."/>
            <person name="Miller N."/>
            <person name="Greco T."/>
            <person name="Kemp K."/>
            <person name="Kramer J."/>
            <person name="Fulton L."/>
            <person name="Mardis E."/>
            <person name="Dante M."/>
            <person name="Pepin K."/>
            <person name="Hillier L.W."/>
            <person name="Nelson J."/>
            <person name="Spieth J."/>
            <person name="Ryan E."/>
            <person name="Andrews S."/>
            <person name="Geisel C."/>
            <person name="Layman D."/>
            <person name="Du H."/>
            <person name="Ali J."/>
            <person name="Berghoff A."/>
            <person name="Jones K."/>
            <person name="Drone K."/>
            <person name="Cotton M."/>
            <person name="Joshu C."/>
            <person name="Antonoiu B."/>
            <person name="Zidanic M."/>
            <person name="Strong C."/>
            <person name="Sun H."/>
            <person name="Lamar B."/>
            <person name="Yordan C."/>
            <person name="Ma P."/>
            <person name="Zhong J."/>
            <person name="Preston R."/>
            <person name="Vil D."/>
            <person name="Shekher M."/>
            <person name="Matero A."/>
            <person name="Shah R."/>
            <person name="Swaby I.K."/>
            <person name="O'Shaughnessy A."/>
            <person name="Rodriguez M."/>
            <person name="Hoffman J."/>
            <person name="Till S."/>
            <person name="Granat S."/>
            <person name="Shohdy N."/>
            <person name="Hasegawa A."/>
            <person name="Hameed A."/>
            <person name="Lodhi M."/>
            <person name="Johnson A."/>
            <person name="Chen E."/>
            <person name="Marra M.A."/>
            <person name="Martienssen R."/>
            <person name="McCombie W.R."/>
        </authorList>
    </citation>
    <scope>NUCLEOTIDE SEQUENCE [LARGE SCALE GENOMIC DNA]</scope>
    <source>
        <strain>cv. Columbia</strain>
    </source>
</reference>
<reference key="2">
    <citation type="journal article" date="2017" name="Plant J.">
        <title>Araport11: a complete reannotation of the Arabidopsis thaliana reference genome.</title>
        <authorList>
            <person name="Cheng C.Y."/>
            <person name="Krishnakumar V."/>
            <person name="Chan A.P."/>
            <person name="Thibaud-Nissen F."/>
            <person name="Schobel S."/>
            <person name="Town C.D."/>
        </authorList>
    </citation>
    <scope>GENOME REANNOTATION</scope>
    <source>
        <strain>cv. Columbia</strain>
    </source>
</reference>
<reference key="3">
    <citation type="journal article" date="2003" name="Science">
        <title>Empirical analysis of transcriptional activity in the Arabidopsis genome.</title>
        <authorList>
            <person name="Yamada K."/>
            <person name="Lim J."/>
            <person name="Dale J.M."/>
            <person name="Chen H."/>
            <person name="Shinn P."/>
            <person name="Palm C.J."/>
            <person name="Southwick A.M."/>
            <person name="Wu H.C."/>
            <person name="Kim C.J."/>
            <person name="Nguyen M."/>
            <person name="Pham P.K."/>
            <person name="Cheuk R.F."/>
            <person name="Karlin-Newmann G."/>
            <person name="Liu S.X."/>
            <person name="Lam B."/>
            <person name="Sakano H."/>
            <person name="Wu T."/>
            <person name="Yu G."/>
            <person name="Miranda M."/>
            <person name="Quach H.L."/>
            <person name="Tripp M."/>
            <person name="Chang C.H."/>
            <person name="Lee J.M."/>
            <person name="Toriumi M.J."/>
            <person name="Chan M.M."/>
            <person name="Tang C.C."/>
            <person name="Onodera C.S."/>
            <person name="Deng J.M."/>
            <person name="Akiyama K."/>
            <person name="Ansari Y."/>
            <person name="Arakawa T."/>
            <person name="Banh J."/>
            <person name="Banno F."/>
            <person name="Bowser L."/>
            <person name="Brooks S.Y."/>
            <person name="Carninci P."/>
            <person name="Chao Q."/>
            <person name="Choy N."/>
            <person name="Enju A."/>
            <person name="Goldsmith A.D."/>
            <person name="Gurjal M."/>
            <person name="Hansen N.F."/>
            <person name="Hayashizaki Y."/>
            <person name="Johnson-Hopson C."/>
            <person name="Hsuan V.W."/>
            <person name="Iida K."/>
            <person name="Karnes M."/>
            <person name="Khan S."/>
            <person name="Koesema E."/>
            <person name="Ishida J."/>
            <person name="Jiang P.X."/>
            <person name="Jones T."/>
            <person name="Kawai J."/>
            <person name="Kamiya A."/>
            <person name="Meyers C."/>
            <person name="Nakajima M."/>
            <person name="Narusaka M."/>
            <person name="Seki M."/>
            <person name="Sakurai T."/>
            <person name="Satou M."/>
            <person name="Tamse R."/>
            <person name="Vaysberg M."/>
            <person name="Wallender E.K."/>
            <person name="Wong C."/>
            <person name="Yamamura Y."/>
            <person name="Yuan S."/>
            <person name="Shinozaki K."/>
            <person name="Davis R.W."/>
            <person name="Theologis A."/>
            <person name="Ecker J.R."/>
        </authorList>
    </citation>
    <scope>NUCLEOTIDE SEQUENCE [LARGE SCALE MRNA]</scope>
    <source>
        <strain>cv. Columbia</strain>
    </source>
</reference>
<reference key="4">
    <citation type="journal article" date="2004" name="J. Exp. Bot.">
        <title>Structure and expression profile of the sucrose synthase multigene family in Arabidopsis.</title>
        <authorList>
            <person name="Baud S."/>
            <person name="Vaultier M.N."/>
            <person name="Rochat C."/>
        </authorList>
    </citation>
    <scope>GENE FAMILY</scope>
    <scope>TISSUE SPECIFICITY</scope>
    <scope>DEVELOPMENTAL STAGE</scope>
    <scope>INDUCTION</scope>
</reference>
<reference key="5">
    <citation type="journal article" date="2007" name="Plant J.">
        <title>Analysis of the sucrose synthase gene family in Arabidopsis.</title>
        <authorList>
            <person name="Bieniawska Z."/>
            <person name="Paul Barratt D.H."/>
            <person name="Garlick A.P."/>
            <person name="Thole V."/>
            <person name="Kruger N.J."/>
            <person name="Martin C."/>
            <person name="Zrenner R."/>
            <person name="Smith A.M."/>
        </authorList>
    </citation>
    <scope>BIOPHYSICOCHEMICAL PROPERTIES</scope>
    <scope>TISSUE SPECIFICITY</scope>
    <scope>DEVELOPMENTAL STAGE</scope>
    <scope>DISRUPTION PHENOTYPE</scope>
</reference>
<reference key="6">
    <citation type="journal article" date="2008" name="J. Exp. Bot.">
        <title>Localization of sucrose synthase in developing seed and siliques of Arabidopsis thaliana reveals diverse roles for SUS during development.</title>
        <authorList>
            <person name="Fallahi H."/>
            <person name="Scofield G.N."/>
            <person name="Badger M.R."/>
            <person name="Chow W.S."/>
            <person name="Furbank R.T."/>
            <person name="Ruan Y.L."/>
        </authorList>
    </citation>
    <scope>TISSUE SPECIFICITY</scope>
</reference>
<reference key="7">
    <citation type="journal article" date="2010" name="Planta">
        <title>Arabidopsis sucrose synthase 2 and 3 modulate metabolic homeostasis and direct carbon towards starch synthesis in developing seeds.</title>
        <authorList>
            <person name="Angeles-Nunez J.G."/>
            <person name="Tiessen A."/>
        </authorList>
    </citation>
    <scope>FUNCTION</scope>
    <scope>DISRUPTION PHENOTYPE</scope>
</reference>
<reference key="8">
    <citation type="journal article" date="2012" name="Plant Mol. Biol.">
        <title>Regulation of AtSUS2 and AtSUS3 by glucose and the transcription factor LEC2 in different tissues and at different stages of Arabidopsis seed development.</title>
        <authorList>
            <person name="Angeles-Nunez J.G."/>
            <person name="Tiessen A."/>
        </authorList>
    </citation>
    <scope>INDUCTION BY LEC2</scope>
</reference>
<reference key="9">
    <citation type="journal article" date="2012" name="Proc. Natl. Acad. Sci. U.S.A.">
        <title>Sucrose synthase activity in the sus1/sus2/sus3/sus4 Arabidopsis mutant is sufficient to support normal cellulose and starch production.</title>
        <authorList>
            <person name="Baroja-Fernandez E."/>
            <person name="Munoz F.J."/>
            <person name="Li J."/>
            <person name="Bahaji A."/>
            <person name="Almagro G."/>
            <person name="Montero M."/>
            <person name="Etxeberria E."/>
            <person name="Hidalgo M."/>
            <person name="Sesma M.T."/>
            <person name="Pozueta-Romero J."/>
        </authorList>
    </citation>
    <scope>BIOPHYSICOCHEMICAL PROPERTIES</scope>
</reference>
<comment type="function">
    <text evidence="5">Sucrose-cleaving enzyme that provides UDP-glucose and fructose for various metabolic pathways. Modulates metabolic homeostasis and direct carbon towards starch synthesis in developing seeds.</text>
</comment>
<comment type="catalytic activity">
    <reaction>
        <text>an NDP-alpha-D-glucose + D-fructose = a ribonucleoside 5'-diphosphate + sucrose + H(+)</text>
        <dbReference type="Rhea" id="RHEA:16241"/>
        <dbReference type="ChEBI" id="CHEBI:15378"/>
        <dbReference type="ChEBI" id="CHEBI:17992"/>
        <dbReference type="ChEBI" id="CHEBI:37721"/>
        <dbReference type="ChEBI" id="CHEBI:57930"/>
        <dbReference type="ChEBI" id="CHEBI:76533"/>
        <dbReference type="EC" id="2.4.1.13"/>
    </reaction>
</comment>
<comment type="biophysicochemical properties">
    <kinetics>
        <KM evidence="3">41.96 mM for D-fructose (synthetic reaction) at pH 9.4</KM>
        <KM evidence="3">0.2 mM for UDP-glucose (synthetic reaction) at pH 9.4</KM>
        <KM evidence="3">108.2 mM for sucrose (degradative reaction) at pH 6</KM>
        <KM evidence="6">48 mM for sucrose (degradative reaction) at pH 7</KM>
        <KM evidence="3">0.09 mM for UDP (degradative reaction) at pH 6</KM>
        <KM evidence="6">0.25 mM for UDP (degradative reaction) at pH 7</KM>
        <KM evidence="6">0.15 mM for ADP (degradative reaction) at pH 7</KM>
        <Vmax evidence="3">7.32 umol/min/mg enzyme for synthetic reaction at pH 9.4</Vmax>
        <Vmax evidence="3">3.03 umol/min/mg enzyme for degradative reaction at pH 6</Vmax>
        <Vmax evidence="6">950.0 umol/min/mg enzyme for degradative reaction at pH 7</Vmax>
    </kinetics>
    <phDependence>
        <text evidence="3 6">Optimum pH is 6.0-7.0 for degradative reaction (PubMed:17257168, PubMed:22184213). Optimum pH is 7.0 for synthetic reaction (PubMed:22184213). Optimum pH is 9.0-9.5 for synthetic reaction (PubMed:17257168).</text>
    </phDependence>
</comment>
<comment type="tissue specificity">
    <text evidence="2 3 4">Detected in the whole plant with highest expression in developing siliques, vasculature of cotyledons and stomatal guard cells. Also detected throughout the mature parts of the root but not in the expanding zone.</text>
</comment>
<comment type="developmental stage">
    <text evidence="2 3">Highly expressed in late-maturing seeds and in geminating seeds (at the protein level).</text>
</comment>
<comment type="induction">
    <text evidence="2 7">By drought stress. By mannitol, an osmotic agent. Positively regulated by LEC2.</text>
</comment>
<comment type="disruption phenotype">
    <text evidence="3 5">No visible phenotype. Diminution of the starch content of developing seeds and increased lipid accumulation early during seed development.</text>
</comment>
<comment type="similarity">
    <text evidence="8">Belongs to the glycosyltransferase 1 family. Plant sucrose synthase subfamily.</text>
</comment>
<comment type="sequence caution" evidence="8">
    <conflict type="erroneous gene model prediction">
        <sequence resource="EMBL-CDS" id="AAC28175"/>
    </conflict>
</comment>
<name>SUS3_ARATH</name>
<proteinExistence type="evidence at protein level"/>
<sequence length="809" mass="92002">MANPKLTRVLSTRDRVQDTLSAHRNELVALLSRYVDQGKGILQPHNLIDELESVIGDDETKKSLSDGPFGEILKSAMEAIVVPPFVALAVRPRPGVWEYVRVNVFELSVEQLTVSEYLRFKEELVDGPNSDPFCLELDFEPFNANVPRPSRSSSIGNGVQFLNRHLSSVMFRNKDCLEPLLDFLRVHKYKGHPLMLNDRIQSISRLQIQLSKAEDHISKLSQETPFSEFEYALQGMGFEKGWGDTAGRVLEMMHLLSDILQAPDPSSLEKFLGMVPMVFNVVILSPHGYFGQANVLGLPDTGGQVVYILDQVRALETEMLLRIKRQGLDISPSILIVTRLIPDAKGTTCNQRLERVSGTEHTHILRVPFRSEKGILRKWISRFDVWPYLENYAQDAASEIVGELQGVPDFIIGNYSDGNLVASLMAHRMGVTQCTIAHALEKTKYPDSDIYWKDFDNKYHFSCQFTADLIAMNNADFIITSTYQEIAGTKNTVGQYESHGAFTLPGLYRVVHGIDVFDPKFNIVSPGADMTIYFPYSEETRRLTALHGSIEEMLYSPDQTDEHVGTLSDRSKPILFSMARLDKVKNISGLVEMYSKNTKLRELVNLVVIAGNIDVNKSKDREEIVEIEKMHNLMKNYKLDGQFRWITAQTNRARNGELYRYIADTRGAFAQPAFYEAFGLTVVEAMTCGLPTFATCHGGPAEIIEHGLSGFHIDPYHPEQAGNIMADFFERCKEDPNHWKKVSDAGLQRIYERYTWKIYSERLMTLAGVYGFWKYVSKLERRETRRYLEMFYILKFRDLVKTVPSTADD</sequence>
<keyword id="KW-0328">Glycosyltransferase</keyword>
<keyword id="KW-1185">Reference proteome</keyword>
<keyword id="KW-0346">Stress response</keyword>
<keyword id="KW-0808">Transferase</keyword>
<dbReference type="EC" id="2.4.1.13"/>
<dbReference type="EMBL" id="AF075597">
    <property type="protein sequence ID" value="AAC28175.1"/>
    <property type="status" value="ALT_SEQ"/>
    <property type="molecule type" value="Genomic_DNA"/>
</dbReference>
<dbReference type="EMBL" id="AL161494">
    <property type="protein sequence ID" value="CAB80721.1"/>
    <property type="molecule type" value="Genomic_DNA"/>
</dbReference>
<dbReference type="EMBL" id="CP002687">
    <property type="protein sequence ID" value="AEE82150.1"/>
    <property type="molecule type" value="Genomic_DNA"/>
</dbReference>
<dbReference type="EMBL" id="AY051001">
    <property type="protein sequence ID" value="AAK93678.1"/>
    <property type="molecule type" value="mRNA"/>
</dbReference>
<dbReference type="EMBL" id="AY056784">
    <property type="protein sequence ID" value="AAL09730.1"/>
    <property type="molecule type" value="mRNA"/>
</dbReference>
<dbReference type="EMBL" id="AY142511">
    <property type="protein sequence ID" value="AAN13112.1"/>
    <property type="molecule type" value="mRNA"/>
</dbReference>
<dbReference type="PIR" id="B85029">
    <property type="entry name" value="B85029"/>
</dbReference>
<dbReference type="PIR" id="T01420">
    <property type="entry name" value="T01420"/>
</dbReference>
<dbReference type="RefSeq" id="NP_192137.1">
    <property type="nucleotide sequence ID" value="NM_116461.4"/>
</dbReference>
<dbReference type="SMR" id="Q9M111"/>
<dbReference type="BioGRID" id="13372">
    <property type="interactions" value="1"/>
</dbReference>
<dbReference type="FunCoup" id="Q9M111">
    <property type="interactions" value="175"/>
</dbReference>
<dbReference type="STRING" id="3702.Q9M111"/>
<dbReference type="CAZy" id="GT4">
    <property type="family name" value="Glycosyltransferase Family 4"/>
</dbReference>
<dbReference type="iPTMnet" id="Q9M111"/>
<dbReference type="PaxDb" id="3702-AT4G02280.1"/>
<dbReference type="ProteomicsDB" id="228311"/>
<dbReference type="EnsemblPlants" id="AT4G02280.1">
    <property type="protein sequence ID" value="AT4G02280.1"/>
    <property type="gene ID" value="AT4G02280"/>
</dbReference>
<dbReference type="GeneID" id="828081"/>
<dbReference type="Gramene" id="AT4G02280.1">
    <property type="protein sequence ID" value="AT4G02280.1"/>
    <property type="gene ID" value="AT4G02280"/>
</dbReference>
<dbReference type="KEGG" id="ath:AT4G02280"/>
<dbReference type="Araport" id="AT4G02280"/>
<dbReference type="TAIR" id="AT4G02280">
    <property type="gene designation" value="SUS3"/>
</dbReference>
<dbReference type="eggNOG" id="KOG0853">
    <property type="taxonomic scope" value="Eukaryota"/>
</dbReference>
<dbReference type="HOGENOM" id="CLU_019158_1_0_1"/>
<dbReference type="InParanoid" id="Q9M111"/>
<dbReference type="OMA" id="HGWFGQE"/>
<dbReference type="OrthoDB" id="937291at2759"/>
<dbReference type="PhylomeDB" id="Q9M111"/>
<dbReference type="BioCyc" id="MetaCyc:AT4G02280-MONOMER"/>
<dbReference type="BRENDA" id="2.4.1.13">
    <property type="organism ID" value="399"/>
</dbReference>
<dbReference type="PRO" id="PR:Q9M111"/>
<dbReference type="Proteomes" id="UP000006548">
    <property type="component" value="Chromosome 4"/>
</dbReference>
<dbReference type="ExpressionAtlas" id="Q9M111">
    <property type="expression patterns" value="baseline and differential"/>
</dbReference>
<dbReference type="GO" id="GO:0016157">
    <property type="term" value="F:sucrose synthase activity"/>
    <property type="evidence" value="ECO:0000314"/>
    <property type="project" value="UniProtKB"/>
</dbReference>
<dbReference type="GO" id="GO:0010555">
    <property type="term" value="P:response to mannitol"/>
    <property type="evidence" value="ECO:0000270"/>
    <property type="project" value="UniProtKB"/>
</dbReference>
<dbReference type="GO" id="GO:0009414">
    <property type="term" value="P:response to water deprivation"/>
    <property type="evidence" value="ECO:0000270"/>
    <property type="project" value="UniProtKB"/>
</dbReference>
<dbReference type="GO" id="GO:0010431">
    <property type="term" value="P:seed maturation"/>
    <property type="evidence" value="ECO:0000315"/>
    <property type="project" value="TAIR"/>
</dbReference>
<dbReference type="GO" id="GO:0005982">
    <property type="term" value="P:starch metabolic process"/>
    <property type="evidence" value="ECO:0000315"/>
    <property type="project" value="TAIR"/>
</dbReference>
<dbReference type="GO" id="GO:0005985">
    <property type="term" value="P:sucrose metabolic process"/>
    <property type="evidence" value="ECO:0000315"/>
    <property type="project" value="TAIR"/>
</dbReference>
<dbReference type="FunFam" id="1.20.120.1230:FF:000001">
    <property type="entry name" value="Sucrose synthase"/>
    <property type="match status" value="1"/>
</dbReference>
<dbReference type="FunFam" id="3.10.450.330:FF:000001">
    <property type="entry name" value="Sucrose synthase"/>
    <property type="match status" value="1"/>
</dbReference>
<dbReference type="FunFam" id="3.40.50.2000:FF:000004">
    <property type="entry name" value="Sucrose synthase"/>
    <property type="match status" value="1"/>
</dbReference>
<dbReference type="Gene3D" id="1.20.120.1230">
    <property type="match status" value="1"/>
</dbReference>
<dbReference type="Gene3D" id="3.10.450.330">
    <property type="match status" value="1"/>
</dbReference>
<dbReference type="Gene3D" id="3.40.50.2000">
    <property type="entry name" value="Glycogen Phosphorylase B"/>
    <property type="match status" value="2"/>
</dbReference>
<dbReference type="InterPro" id="IPR001296">
    <property type="entry name" value="Glyco_trans_1"/>
</dbReference>
<dbReference type="InterPro" id="IPR000368">
    <property type="entry name" value="Sucrose_synth_GT-B1"/>
</dbReference>
<dbReference type="InterPro" id="IPR012820">
    <property type="entry name" value="Sucrose_synthase_pln/cyn"/>
</dbReference>
<dbReference type="InterPro" id="IPR056736">
    <property type="entry name" value="SUS_EPBD"/>
</dbReference>
<dbReference type="InterPro" id="IPR056735">
    <property type="entry name" value="SUS_N"/>
</dbReference>
<dbReference type="NCBIfam" id="TIGR02470">
    <property type="entry name" value="sucr_synth"/>
    <property type="match status" value="1"/>
</dbReference>
<dbReference type="PANTHER" id="PTHR45839">
    <property type="match status" value="1"/>
</dbReference>
<dbReference type="PANTHER" id="PTHR45839:SF13">
    <property type="entry name" value="SUCROSE SYNTHASE 3"/>
    <property type="match status" value="1"/>
</dbReference>
<dbReference type="Pfam" id="PF00534">
    <property type="entry name" value="Glycos_transf_1"/>
    <property type="match status" value="1"/>
</dbReference>
<dbReference type="Pfam" id="PF00862">
    <property type="entry name" value="GT-B_Sucrose_synth"/>
    <property type="match status" value="1"/>
</dbReference>
<dbReference type="Pfam" id="PF24862">
    <property type="entry name" value="SUS_EPBD"/>
    <property type="match status" value="1"/>
</dbReference>
<dbReference type="Pfam" id="PF24861">
    <property type="entry name" value="SUS_N"/>
    <property type="match status" value="1"/>
</dbReference>
<dbReference type="SUPFAM" id="SSF53756">
    <property type="entry name" value="UDP-Glycosyltransferase/glycogen phosphorylase"/>
    <property type="match status" value="1"/>
</dbReference>
<organism>
    <name type="scientific">Arabidopsis thaliana</name>
    <name type="common">Mouse-ear cress</name>
    <dbReference type="NCBI Taxonomy" id="3702"/>
    <lineage>
        <taxon>Eukaryota</taxon>
        <taxon>Viridiplantae</taxon>
        <taxon>Streptophyta</taxon>
        <taxon>Embryophyta</taxon>
        <taxon>Tracheophyta</taxon>
        <taxon>Spermatophyta</taxon>
        <taxon>Magnoliopsida</taxon>
        <taxon>eudicotyledons</taxon>
        <taxon>Gunneridae</taxon>
        <taxon>Pentapetalae</taxon>
        <taxon>rosids</taxon>
        <taxon>malvids</taxon>
        <taxon>Brassicales</taxon>
        <taxon>Brassicaceae</taxon>
        <taxon>Camelineae</taxon>
        <taxon>Arabidopsis</taxon>
    </lineage>
</organism>